<accession>D2NGI9</accession>
<comment type="function">
    <text evidence="1">Catalyzes the pyrimidine ring opening between N-3 and C-4 by an unusual flavin hydroperoxide-catalyzed mechanism, adding oxygen atoms in the process to yield ureidoacrylate peracid, that immediately reacts with FMN forming ureidoacrylate and FMN-N(5)-oxide. The FMN-N(5)-oxide reacts spontaneously with NADH to produce FMN. Requires the flavin reductase RutF to regenerate FMN in vivo.</text>
</comment>
<comment type="catalytic activity">
    <reaction evidence="1">
        <text>uracil + FMNH2 + NADH + O2 = (Z)-3-ureidoacrylate + FMN + NAD(+) + H2O + H(+)</text>
        <dbReference type="Rhea" id="RHEA:31587"/>
        <dbReference type="ChEBI" id="CHEBI:15377"/>
        <dbReference type="ChEBI" id="CHEBI:15378"/>
        <dbReference type="ChEBI" id="CHEBI:15379"/>
        <dbReference type="ChEBI" id="CHEBI:17568"/>
        <dbReference type="ChEBI" id="CHEBI:57540"/>
        <dbReference type="ChEBI" id="CHEBI:57618"/>
        <dbReference type="ChEBI" id="CHEBI:57945"/>
        <dbReference type="ChEBI" id="CHEBI:58210"/>
        <dbReference type="ChEBI" id="CHEBI:59891"/>
        <dbReference type="EC" id="1.14.99.46"/>
    </reaction>
</comment>
<comment type="catalytic activity">
    <reaction evidence="1">
        <text>thymine + FMNH2 + NADH + O2 = (Z)-2-methylureidoacrylate + FMN + NAD(+) + H2O + H(+)</text>
        <dbReference type="Rhea" id="RHEA:31599"/>
        <dbReference type="ChEBI" id="CHEBI:15377"/>
        <dbReference type="ChEBI" id="CHEBI:15378"/>
        <dbReference type="ChEBI" id="CHEBI:15379"/>
        <dbReference type="ChEBI" id="CHEBI:17821"/>
        <dbReference type="ChEBI" id="CHEBI:57540"/>
        <dbReference type="ChEBI" id="CHEBI:57618"/>
        <dbReference type="ChEBI" id="CHEBI:57945"/>
        <dbReference type="ChEBI" id="CHEBI:58210"/>
        <dbReference type="ChEBI" id="CHEBI:143783"/>
        <dbReference type="EC" id="1.14.99.46"/>
    </reaction>
</comment>
<comment type="induction">
    <text evidence="1">Up-regulated by the nitrogen regulatory protein C (NtrC also called GlnG) and repressed by RutR.</text>
</comment>
<comment type="similarity">
    <text evidence="1">Belongs to the NtaA/SnaA/DszA monooxygenase family. RutA subfamily.</text>
</comment>
<evidence type="ECO:0000255" key="1">
    <source>
        <dbReference type="HAMAP-Rule" id="MF_01699"/>
    </source>
</evidence>
<organism>
    <name type="scientific">Escherichia coli O150:H5 (strain SE15)</name>
    <dbReference type="NCBI Taxonomy" id="431946"/>
    <lineage>
        <taxon>Bacteria</taxon>
        <taxon>Pseudomonadati</taxon>
        <taxon>Pseudomonadota</taxon>
        <taxon>Gammaproteobacteria</taxon>
        <taxon>Enterobacterales</taxon>
        <taxon>Enterobacteriaceae</taxon>
        <taxon>Escherichia</taxon>
    </lineage>
</organism>
<reference key="1">
    <citation type="journal article" date="2010" name="J. Bacteriol.">
        <title>Complete genome sequence of the wild-type commensal Escherichia coli strain SE15, belonging to phylogenetic group B2.</title>
        <authorList>
            <person name="Toh H."/>
            <person name="Oshima K."/>
            <person name="Toyoda A."/>
            <person name="Ogura Y."/>
            <person name="Ooka T."/>
            <person name="Sasamoto H."/>
            <person name="Park S.H."/>
            <person name="Iyoda S."/>
            <person name="Kurokawa K."/>
            <person name="Morita H."/>
            <person name="Itoh K."/>
            <person name="Taylor T.D."/>
            <person name="Hayashi T."/>
            <person name="Hattori M."/>
        </authorList>
    </citation>
    <scope>NUCLEOTIDE SEQUENCE [LARGE SCALE GENOMIC DNA]</scope>
    <source>
        <strain>SE15</strain>
    </source>
</reference>
<dbReference type="EC" id="1.14.99.46" evidence="1"/>
<dbReference type="EMBL" id="AP009378">
    <property type="protein sequence ID" value="BAI54458.1"/>
    <property type="molecule type" value="Genomic_DNA"/>
</dbReference>
<dbReference type="SMR" id="D2NGI9"/>
<dbReference type="KEGG" id="ese:ECSF_0918"/>
<dbReference type="PATRIC" id="fig|431946.3.peg.962"/>
<dbReference type="HOGENOM" id="CLU_027853_1_1_6"/>
<dbReference type="GO" id="GO:0008726">
    <property type="term" value="F:alkanesulfonate monooxygenase activity"/>
    <property type="evidence" value="ECO:0007669"/>
    <property type="project" value="TreeGrafter"/>
</dbReference>
<dbReference type="GO" id="GO:0052614">
    <property type="term" value="F:uracil oxygenase activity"/>
    <property type="evidence" value="ECO:0007669"/>
    <property type="project" value="UniProtKB-EC"/>
</dbReference>
<dbReference type="GO" id="GO:0046306">
    <property type="term" value="P:alkanesulfonate catabolic process"/>
    <property type="evidence" value="ECO:0007669"/>
    <property type="project" value="TreeGrafter"/>
</dbReference>
<dbReference type="GO" id="GO:0019740">
    <property type="term" value="P:nitrogen utilization"/>
    <property type="evidence" value="ECO:0007669"/>
    <property type="project" value="UniProtKB-UniRule"/>
</dbReference>
<dbReference type="GO" id="GO:0006212">
    <property type="term" value="P:uracil catabolic process"/>
    <property type="evidence" value="ECO:0007669"/>
    <property type="project" value="UniProtKB-UniRule"/>
</dbReference>
<dbReference type="CDD" id="cd01094">
    <property type="entry name" value="Alkanesulfonate_monoxygenase"/>
    <property type="match status" value="1"/>
</dbReference>
<dbReference type="FunFam" id="3.20.20.30:FF:000003">
    <property type="entry name" value="Pyrimidine monooxygenase RutA"/>
    <property type="match status" value="1"/>
</dbReference>
<dbReference type="Gene3D" id="3.20.20.30">
    <property type="entry name" value="Luciferase-like domain"/>
    <property type="match status" value="1"/>
</dbReference>
<dbReference type="HAMAP" id="MF_01699">
    <property type="entry name" value="RutA"/>
    <property type="match status" value="1"/>
</dbReference>
<dbReference type="InterPro" id="IPR011251">
    <property type="entry name" value="Luciferase-like_dom"/>
</dbReference>
<dbReference type="InterPro" id="IPR036661">
    <property type="entry name" value="Luciferase-like_sf"/>
</dbReference>
<dbReference type="InterPro" id="IPR019914">
    <property type="entry name" value="Pyrimidine_monooxygenase_RutA"/>
</dbReference>
<dbReference type="InterPro" id="IPR050172">
    <property type="entry name" value="SsuD_RutA_monooxygenase"/>
</dbReference>
<dbReference type="NCBIfam" id="TIGR03612">
    <property type="entry name" value="RutA"/>
    <property type="match status" value="1"/>
</dbReference>
<dbReference type="PANTHER" id="PTHR42847">
    <property type="entry name" value="ALKANESULFONATE MONOOXYGENASE"/>
    <property type="match status" value="1"/>
</dbReference>
<dbReference type="PANTHER" id="PTHR42847:SF4">
    <property type="entry name" value="ALKANESULFONATE MONOOXYGENASE-RELATED"/>
    <property type="match status" value="1"/>
</dbReference>
<dbReference type="Pfam" id="PF00296">
    <property type="entry name" value="Bac_luciferase"/>
    <property type="match status" value="1"/>
</dbReference>
<dbReference type="SUPFAM" id="SSF51679">
    <property type="entry name" value="Bacterial luciferase-like"/>
    <property type="match status" value="1"/>
</dbReference>
<sequence>MQDAAPRLTFTLRDEERLMMKIGVFVPIGNNGWLISTHAPQYMPTFELNKAIVQKAEHYHFDFALSMIKLRGFGGKTEFWDHNLESFTLMAGLAAVTSRIQIYATAATLTLPPAIVARMAATIDSISGGRFGVNLVTGWQKPEYEQMGIWPGDDYFSRRYDYLTEYVQVLRDLWGSGKSDFKGDFFTMDDCRVSPQPSVPMKVICAGQSDAGMAFSARYADFNFCFGKGVNTPTAFAPTAARMKQAAEQTGRDVGSYVLFMVIADETDDAARAKWEHYKAGADEEALSWLTEQSQKDTRSGTDTNVRQMADPTSAVNINMGTLVGSYASVARMLDEVANVPGAEGVLLTFDDFLSGIETFGERIQPLMQCRAHLPALTQEVA</sequence>
<name>RUTA_ECOS5</name>
<protein>
    <recommendedName>
        <fullName evidence="1">Pyrimidine monooxygenase RutA</fullName>
        <ecNumber evidence="1">1.14.99.46</ecNumber>
    </recommendedName>
</protein>
<proteinExistence type="inferred from homology"/>
<feature type="chain" id="PRO_0000402608" description="Pyrimidine monooxygenase RutA">
    <location>
        <begin position="1"/>
        <end position="382"/>
    </location>
</feature>
<feature type="binding site" evidence="1">
    <location>
        <begin position="68"/>
        <end position="69"/>
    </location>
    <ligand>
        <name>FMN</name>
        <dbReference type="ChEBI" id="CHEBI:58210"/>
    </ligand>
</feature>
<feature type="binding site" evidence="1">
    <location>
        <position position="134"/>
    </location>
    <ligand>
        <name>FMN</name>
        <dbReference type="ChEBI" id="CHEBI:58210"/>
    </ligand>
</feature>
<feature type="binding site" evidence="1">
    <location>
        <position position="143"/>
    </location>
    <ligand>
        <name>FMN</name>
        <dbReference type="ChEBI" id="CHEBI:58210"/>
    </ligand>
</feature>
<feature type="binding site" evidence="1">
    <location>
        <begin position="159"/>
        <end position="160"/>
    </location>
    <ligand>
        <name>FMN</name>
        <dbReference type="ChEBI" id="CHEBI:58210"/>
    </ligand>
</feature>
<feature type="binding site" evidence="1">
    <location>
        <position position="209"/>
    </location>
    <ligand>
        <name>FMN</name>
        <dbReference type="ChEBI" id="CHEBI:58210"/>
    </ligand>
</feature>
<keyword id="KW-0285">Flavoprotein</keyword>
<keyword id="KW-0288">FMN</keyword>
<keyword id="KW-0503">Monooxygenase</keyword>
<keyword id="KW-0521">NADP</keyword>
<keyword id="KW-0560">Oxidoreductase</keyword>
<gene>
    <name evidence="1" type="primary">rutA</name>
    <name type="ordered locus">ECSF_0918</name>
</gene>